<evidence type="ECO:0000250" key="1"/>
<evidence type="ECO:0000256" key="2">
    <source>
        <dbReference type="SAM" id="MobiDB-lite"/>
    </source>
</evidence>
<evidence type="ECO:0000305" key="3"/>
<reference key="1">
    <citation type="journal article" date="2002" name="Nature">
        <title>Sequence and analysis of chromosome 2 of Dictyostelium discoideum.</title>
        <authorList>
            <person name="Gloeckner G."/>
            <person name="Eichinger L."/>
            <person name="Szafranski K."/>
            <person name="Pachebat J.A."/>
            <person name="Bankier A.T."/>
            <person name="Dear P.H."/>
            <person name="Lehmann R."/>
            <person name="Baumgart C."/>
            <person name="Parra G."/>
            <person name="Abril J.F."/>
            <person name="Guigo R."/>
            <person name="Kumpf K."/>
            <person name="Tunggal B."/>
            <person name="Cox E.C."/>
            <person name="Quail M.A."/>
            <person name="Platzer M."/>
            <person name="Rosenthal A."/>
            <person name="Noegel A.A."/>
        </authorList>
    </citation>
    <scope>NUCLEOTIDE SEQUENCE [LARGE SCALE GENOMIC DNA]</scope>
    <source>
        <strain>AX4</strain>
    </source>
</reference>
<reference key="2">
    <citation type="journal article" date="2005" name="Nature">
        <title>The genome of the social amoeba Dictyostelium discoideum.</title>
        <authorList>
            <person name="Eichinger L."/>
            <person name="Pachebat J.A."/>
            <person name="Gloeckner G."/>
            <person name="Rajandream M.A."/>
            <person name="Sucgang R."/>
            <person name="Berriman M."/>
            <person name="Song J."/>
            <person name="Olsen R."/>
            <person name="Szafranski K."/>
            <person name="Xu Q."/>
            <person name="Tunggal B."/>
            <person name="Kummerfeld S."/>
            <person name="Madera M."/>
            <person name="Konfortov B.A."/>
            <person name="Rivero F."/>
            <person name="Bankier A.T."/>
            <person name="Lehmann R."/>
            <person name="Hamlin N."/>
            <person name="Davies R."/>
            <person name="Gaudet P."/>
            <person name="Fey P."/>
            <person name="Pilcher K."/>
            <person name="Chen G."/>
            <person name="Saunders D."/>
            <person name="Sodergren E.J."/>
            <person name="Davis P."/>
            <person name="Kerhornou A."/>
            <person name="Nie X."/>
            <person name="Hall N."/>
            <person name="Anjard C."/>
            <person name="Hemphill L."/>
            <person name="Bason N."/>
            <person name="Farbrother P."/>
            <person name="Desany B."/>
            <person name="Just E."/>
            <person name="Morio T."/>
            <person name="Rost R."/>
            <person name="Churcher C.M."/>
            <person name="Cooper J."/>
            <person name="Haydock S."/>
            <person name="van Driessche N."/>
            <person name="Cronin A."/>
            <person name="Goodhead I."/>
            <person name="Muzny D.M."/>
            <person name="Mourier T."/>
            <person name="Pain A."/>
            <person name="Lu M."/>
            <person name="Harper D."/>
            <person name="Lindsay R."/>
            <person name="Hauser H."/>
            <person name="James K.D."/>
            <person name="Quiles M."/>
            <person name="Madan Babu M."/>
            <person name="Saito T."/>
            <person name="Buchrieser C."/>
            <person name="Wardroper A."/>
            <person name="Felder M."/>
            <person name="Thangavelu M."/>
            <person name="Johnson D."/>
            <person name="Knights A."/>
            <person name="Loulseged H."/>
            <person name="Mungall K.L."/>
            <person name="Oliver K."/>
            <person name="Price C."/>
            <person name="Quail M.A."/>
            <person name="Urushihara H."/>
            <person name="Hernandez J."/>
            <person name="Rabbinowitsch E."/>
            <person name="Steffen D."/>
            <person name="Sanders M."/>
            <person name="Ma J."/>
            <person name="Kohara Y."/>
            <person name="Sharp S."/>
            <person name="Simmonds M.N."/>
            <person name="Spiegler S."/>
            <person name="Tivey A."/>
            <person name="Sugano S."/>
            <person name="White B."/>
            <person name="Walker D."/>
            <person name="Woodward J.R."/>
            <person name="Winckler T."/>
            <person name="Tanaka Y."/>
            <person name="Shaulsky G."/>
            <person name="Schleicher M."/>
            <person name="Weinstock G.M."/>
            <person name="Rosenthal A."/>
            <person name="Cox E.C."/>
            <person name="Chisholm R.L."/>
            <person name="Gibbs R.A."/>
            <person name="Loomis W.F."/>
            <person name="Platzer M."/>
            <person name="Kay R.R."/>
            <person name="Williams J.G."/>
            <person name="Dear P.H."/>
            <person name="Noegel A.A."/>
            <person name="Barrell B.G."/>
            <person name="Kuspa A."/>
        </authorList>
    </citation>
    <scope>NUCLEOTIDE SEQUENCE [LARGE SCALE GENOMIC DNA]</scope>
    <source>
        <strain>AX4</strain>
    </source>
</reference>
<dbReference type="EMBL" id="AAFI02000008">
    <property type="protein sequence ID" value="EAL71025.1"/>
    <property type="molecule type" value="Genomic_DNA"/>
</dbReference>
<dbReference type="RefSeq" id="XP_644962.1">
    <property type="nucleotide sequence ID" value="XM_639870.1"/>
</dbReference>
<dbReference type="SMR" id="Q86B11"/>
<dbReference type="FunCoup" id="Q86B11">
    <property type="interactions" value="220"/>
</dbReference>
<dbReference type="STRING" id="44689.Q86B11"/>
<dbReference type="PaxDb" id="44689-DDB0266418"/>
<dbReference type="EnsemblProtists" id="EAL71025">
    <property type="protein sequence ID" value="EAL71025"/>
    <property type="gene ID" value="DDB_G0272775"/>
</dbReference>
<dbReference type="GeneID" id="8618640"/>
<dbReference type="KEGG" id="ddi:DDB_G0272775"/>
<dbReference type="dictyBase" id="DDB_G0272775">
    <property type="gene designation" value="anapc8"/>
</dbReference>
<dbReference type="VEuPathDB" id="AmoebaDB:DDB_G0272775"/>
<dbReference type="eggNOG" id="KOG1155">
    <property type="taxonomic scope" value="Eukaryota"/>
</dbReference>
<dbReference type="HOGENOM" id="CLU_018320_4_0_1"/>
<dbReference type="InParanoid" id="Q86B11"/>
<dbReference type="OMA" id="ERCLYHS"/>
<dbReference type="PhylomeDB" id="Q86B11"/>
<dbReference type="Reactome" id="R-DDI-141430">
    <property type="pathway name" value="Inactivation of APC/C via direct inhibition of the APC/C complex"/>
</dbReference>
<dbReference type="Reactome" id="R-DDI-174048">
    <property type="pathway name" value="APC/C:Cdc20 mediated degradation of Cyclin B"/>
</dbReference>
<dbReference type="Reactome" id="R-DDI-174084">
    <property type="pathway name" value="Autodegradation of Cdh1 by Cdh1:APC/C"/>
</dbReference>
<dbReference type="Reactome" id="R-DDI-174154">
    <property type="pathway name" value="APC/C:Cdc20 mediated degradation of Securin"/>
</dbReference>
<dbReference type="Reactome" id="R-DDI-174178">
    <property type="pathway name" value="APC/C:Cdh1 mediated degradation of Cdc20 and other APC/C:Cdh1 targeted proteins in late mitosis/early G1"/>
</dbReference>
<dbReference type="Reactome" id="R-DDI-174184">
    <property type="pathway name" value="Cdc20:Phospho-APC/C mediated degradation of Cyclin A"/>
</dbReference>
<dbReference type="Reactome" id="R-DDI-176407">
    <property type="pathway name" value="Conversion from APC/C:Cdc20 to APC/C:Cdh1 in late anaphase"/>
</dbReference>
<dbReference type="Reactome" id="R-DDI-176408">
    <property type="pathway name" value="Regulation of APC/C activators between G1/S and early anaphase"/>
</dbReference>
<dbReference type="Reactome" id="R-DDI-176409">
    <property type="pathway name" value="APC/C:Cdc20 mediated degradation of mitotic proteins"/>
</dbReference>
<dbReference type="Reactome" id="R-DDI-176412">
    <property type="pathway name" value="Phosphorylation of the APC/C"/>
</dbReference>
<dbReference type="Reactome" id="R-DDI-179409">
    <property type="pathway name" value="APC-Cdc20 mediated degradation of Nek2A"/>
</dbReference>
<dbReference type="Reactome" id="R-DDI-2467813">
    <property type="pathway name" value="Separation of Sister Chromatids"/>
</dbReference>
<dbReference type="Reactome" id="R-DDI-2559582">
    <property type="pathway name" value="Senescence-Associated Secretory Phenotype (SASP)"/>
</dbReference>
<dbReference type="Reactome" id="R-DDI-69017">
    <property type="pathway name" value="CDK-mediated phosphorylation and removal of Cdc6"/>
</dbReference>
<dbReference type="Reactome" id="R-DDI-983168">
    <property type="pathway name" value="Antigen processing: Ubiquitination &amp; Proteasome degradation"/>
</dbReference>
<dbReference type="UniPathway" id="UPA00143"/>
<dbReference type="PRO" id="PR:Q86B11"/>
<dbReference type="Proteomes" id="UP000002195">
    <property type="component" value="Chromosome 2"/>
</dbReference>
<dbReference type="GO" id="GO:0005680">
    <property type="term" value="C:anaphase-promoting complex"/>
    <property type="evidence" value="ECO:0000318"/>
    <property type="project" value="GO_Central"/>
</dbReference>
<dbReference type="GO" id="GO:0031145">
    <property type="term" value="P:anaphase-promoting complex-dependent catabolic process"/>
    <property type="evidence" value="ECO:0000318"/>
    <property type="project" value="GO_Central"/>
</dbReference>
<dbReference type="GO" id="GO:0051301">
    <property type="term" value="P:cell division"/>
    <property type="evidence" value="ECO:0000318"/>
    <property type="project" value="GO_Central"/>
</dbReference>
<dbReference type="GO" id="GO:0045842">
    <property type="term" value="P:positive regulation of mitotic metaphase/anaphase transition"/>
    <property type="evidence" value="ECO:0000318"/>
    <property type="project" value="GO_Central"/>
</dbReference>
<dbReference type="GO" id="GO:0016567">
    <property type="term" value="P:protein ubiquitination"/>
    <property type="evidence" value="ECO:0000318"/>
    <property type="project" value="GO_Central"/>
</dbReference>
<dbReference type="Gene3D" id="1.25.40.10">
    <property type="entry name" value="Tetratricopeptide repeat domain"/>
    <property type="match status" value="3"/>
</dbReference>
<dbReference type="InterPro" id="IPR007192">
    <property type="entry name" value="APC8"/>
</dbReference>
<dbReference type="InterPro" id="IPR011990">
    <property type="entry name" value="TPR-like_helical_dom_sf"/>
</dbReference>
<dbReference type="InterPro" id="IPR019734">
    <property type="entry name" value="TPR_rpt"/>
</dbReference>
<dbReference type="PANTHER" id="PTHR12558">
    <property type="entry name" value="CELL DIVISION CYCLE 16,23,27"/>
    <property type="match status" value="1"/>
</dbReference>
<dbReference type="PANTHER" id="PTHR12558:SF10">
    <property type="entry name" value="CELL DIVISION CYCLE PROTEIN 23 HOMOLOG"/>
    <property type="match status" value="1"/>
</dbReference>
<dbReference type="Pfam" id="PF04049">
    <property type="entry name" value="ANAPC8"/>
    <property type="match status" value="1"/>
</dbReference>
<dbReference type="Pfam" id="PF13414">
    <property type="entry name" value="TPR_11"/>
    <property type="match status" value="1"/>
</dbReference>
<dbReference type="Pfam" id="PF13181">
    <property type="entry name" value="TPR_8"/>
    <property type="match status" value="1"/>
</dbReference>
<dbReference type="SMART" id="SM00028">
    <property type="entry name" value="TPR"/>
    <property type="match status" value="5"/>
</dbReference>
<dbReference type="SUPFAM" id="SSF48452">
    <property type="entry name" value="TPR-like"/>
    <property type="match status" value="1"/>
</dbReference>
<dbReference type="PROSITE" id="PS50005">
    <property type="entry name" value="TPR"/>
    <property type="match status" value="6"/>
</dbReference>
<dbReference type="PROSITE" id="PS50293">
    <property type="entry name" value="TPR_REGION"/>
    <property type="match status" value="1"/>
</dbReference>
<sequence length="592" mass="69874">MSQIKIELIKSINDLNSRGLLLSSKWSSEQLNGLSPTILATPLTNEEQLSIISQPSISSPPIGSNEYYKYILAKNYFDLKEYRRCSDVLIDCNKYQLPIFLRSYATYLAIEKRREEDIIEQQAQQQQQQQQAQQQAQQAQQESQQNDKNNDTNNNNKTDQQQQQQQQQKIEQCQEFKQLFQFYKKLYIENKKDMDGFLLYFYSMLLKKQRDFTMARKVLIESVHKYPCNWSAWSDLSSLCSDSADIIMQLSLPDHFMKDFFLAHFKLELQQNNESLVIYQQLSRTLFTQSTYILAQTAIGNYNLRAYDIGEELFERLIELEPNRLENIDIYSNILYVRDKKASLSMLAHKAMKIEKYCPETCCIIGNYYSLKLEHDKAILYFQRALKLNDRYLSAWTLIGHEFLEIKNVSAAINAYRKAVDINPRDYRAWYGLGQTYQLLKLPLYSLYYFKKATTLRPYDPRMWCAAGGCYEFIERIPEAIKCYERAEENYDRERVAINKLAKLYQEIQNNEKAAFYYKKNLYYCDQEKIDGQEIIDALLFLANFYKNQNQTQSEQYCLRLLDYAGPEKEEAKSILREIHSKSKLSSKSKPK</sequence>
<proteinExistence type="inferred from homology"/>
<comment type="function">
    <text evidence="1">Component of the anaphase promoting complex/cyclosome (APC/C), a cell cycle-regulated E3 ubiquitin-protein ligase complex that controls progression through mitosis and the G1 phase of the cell cycle.</text>
</comment>
<comment type="pathway">
    <text>Protein modification; protein ubiquitination.</text>
</comment>
<comment type="subunit">
    <text evidence="1">The APC/C is composed of at least 13 subunits that stay tightly associated throughout the cell cycle: anapc1, anapc2, anapc3, anapc4, anapc5, anapc6, anapc7, anapc8, anapc10, anapc11, cdc20, cdc26 and cdh1.</text>
</comment>
<comment type="subcellular location">
    <subcellularLocation>
        <location evidence="1">Nucleus</location>
    </subcellularLocation>
</comment>
<comment type="similarity">
    <text evidence="3">Belongs to the APC8/CDC23 family.</text>
</comment>
<accession>Q86B11</accession>
<accession>Q558V4</accession>
<keyword id="KW-0131">Cell cycle</keyword>
<keyword id="KW-0132">Cell division</keyword>
<keyword id="KW-0498">Mitosis</keyword>
<keyword id="KW-0539">Nucleus</keyword>
<keyword id="KW-1185">Reference proteome</keyword>
<keyword id="KW-0677">Repeat</keyword>
<keyword id="KW-0802">TPR repeat</keyword>
<keyword id="KW-0833">Ubl conjugation pathway</keyword>
<gene>
    <name type="primary">anapc8</name>
    <name type="synonym">apc8</name>
    <name type="synonym">cdc23</name>
    <name type="ORF">DDB_G0272775</name>
</gene>
<feature type="chain" id="PRO_0000328556" description="Anaphase-promoting complex subunit 8">
    <location>
        <begin position="1"/>
        <end position="592"/>
    </location>
</feature>
<feature type="repeat" description="TPR 1">
    <location>
        <begin position="66"/>
        <end position="99"/>
    </location>
</feature>
<feature type="repeat" description="TPR 2">
    <location>
        <begin position="160"/>
        <end position="193"/>
    </location>
</feature>
<feature type="repeat" description="TPR 3">
    <location>
        <begin position="291"/>
        <end position="324"/>
    </location>
</feature>
<feature type="repeat" description="TPR 4">
    <location>
        <begin position="359"/>
        <end position="392"/>
    </location>
</feature>
<feature type="repeat" description="TPR 5">
    <location>
        <begin position="393"/>
        <end position="426"/>
    </location>
</feature>
<feature type="repeat" description="TPR 6">
    <location>
        <begin position="428"/>
        <end position="460"/>
    </location>
</feature>
<feature type="repeat" description="TPR 7">
    <location>
        <begin position="461"/>
        <end position="494"/>
    </location>
</feature>
<feature type="repeat" description="TPR 8">
    <location>
        <begin position="496"/>
        <end position="528"/>
    </location>
</feature>
<feature type="region of interest" description="Disordered" evidence="2">
    <location>
        <begin position="129"/>
        <end position="166"/>
    </location>
</feature>
<name>CDC23_DICDI</name>
<organism>
    <name type="scientific">Dictyostelium discoideum</name>
    <name type="common">Social amoeba</name>
    <dbReference type="NCBI Taxonomy" id="44689"/>
    <lineage>
        <taxon>Eukaryota</taxon>
        <taxon>Amoebozoa</taxon>
        <taxon>Evosea</taxon>
        <taxon>Eumycetozoa</taxon>
        <taxon>Dictyostelia</taxon>
        <taxon>Dictyosteliales</taxon>
        <taxon>Dictyosteliaceae</taxon>
        <taxon>Dictyostelium</taxon>
    </lineage>
</organism>
<protein>
    <recommendedName>
        <fullName>Anaphase-promoting complex subunit 8</fullName>
        <shortName>APC8</shortName>
    </recommendedName>
    <alternativeName>
        <fullName>Cell division cycle protein 23 homolog</fullName>
    </alternativeName>
</protein>